<sequence length="192" mass="20619">MTQSSPQNLILVGRVAGAFGVRGELRIATYTEDPLTLTRFKALTRQDGSPALTVQTARVVKDGVVARCAGVDTKEAADALRGLRLYVPRAALPEPDEDEYYLADLIGLPVRHVATDELLGKIKSVQNFGADDLLEIDPALGGQTWYLPFTRAAVPEVKIADGVVLADPPALVGEPEGPESPAEDDDGERHYD</sequence>
<gene>
    <name evidence="1" type="primary">rimM</name>
    <name type="ordered locus">Caul_4889</name>
</gene>
<comment type="function">
    <text evidence="1">An accessory protein needed during the final step in the assembly of 30S ribosomal subunit, possibly for assembly of the head region. Essential for efficient processing of 16S rRNA. May be needed both before and after RbfA during the maturation of 16S rRNA. It has affinity for free ribosomal 30S subunits but not for 70S ribosomes.</text>
</comment>
<comment type="subunit">
    <text evidence="1">Binds ribosomal protein uS19.</text>
</comment>
<comment type="subcellular location">
    <subcellularLocation>
        <location evidence="1">Cytoplasm</location>
    </subcellularLocation>
</comment>
<comment type="domain">
    <text evidence="1">The PRC barrel domain binds ribosomal protein uS19.</text>
</comment>
<comment type="similarity">
    <text evidence="1">Belongs to the RimM family.</text>
</comment>
<comment type="sequence caution" evidence="3">
    <conflict type="erroneous initiation">
        <sequence resource="EMBL-CDS" id="ABZ74009"/>
    </conflict>
</comment>
<keyword id="KW-0143">Chaperone</keyword>
<keyword id="KW-0963">Cytoplasm</keyword>
<keyword id="KW-0690">Ribosome biogenesis</keyword>
<keyword id="KW-0698">rRNA processing</keyword>
<reference key="1">
    <citation type="submission" date="2008-01" db="EMBL/GenBank/DDBJ databases">
        <title>Complete sequence of chromosome of Caulobacter sp. K31.</title>
        <authorList>
            <consortium name="US DOE Joint Genome Institute"/>
            <person name="Copeland A."/>
            <person name="Lucas S."/>
            <person name="Lapidus A."/>
            <person name="Barry K."/>
            <person name="Glavina del Rio T."/>
            <person name="Dalin E."/>
            <person name="Tice H."/>
            <person name="Pitluck S."/>
            <person name="Bruce D."/>
            <person name="Goodwin L."/>
            <person name="Thompson L.S."/>
            <person name="Brettin T."/>
            <person name="Detter J.C."/>
            <person name="Han C."/>
            <person name="Schmutz J."/>
            <person name="Larimer F."/>
            <person name="Land M."/>
            <person name="Hauser L."/>
            <person name="Kyrpides N."/>
            <person name="Kim E."/>
            <person name="Stephens C."/>
            <person name="Richardson P."/>
        </authorList>
    </citation>
    <scope>NUCLEOTIDE SEQUENCE [LARGE SCALE GENOMIC DNA]</scope>
    <source>
        <strain>K31</strain>
    </source>
</reference>
<protein>
    <recommendedName>
        <fullName evidence="1">Ribosome maturation factor RimM</fullName>
    </recommendedName>
</protein>
<evidence type="ECO:0000255" key="1">
    <source>
        <dbReference type="HAMAP-Rule" id="MF_00014"/>
    </source>
</evidence>
<evidence type="ECO:0000256" key="2">
    <source>
        <dbReference type="SAM" id="MobiDB-lite"/>
    </source>
</evidence>
<evidence type="ECO:0000305" key="3"/>
<feature type="chain" id="PRO_0000351742" description="Ribosome maturation factor RimM">
    <location>
        <begin position="1"/>
        <end position="192"/>
    </location>
</feature>
<feature type="domain" description="PRC barrel" evidence="1">
    <location>
        <begin position="97"/>
        <end position="172"/>
    </location>
</feature>
<feature type="region of interest" description="Disordered" evidence="2">
    <location>
        <begin position="168"/>
        <end position="192"/>
    </location>
</feature>
<accession>B0T563</accession>
<dbReference type="EMBL" id="CP000927">
    <property type="protein sequence ID" value="ABZ74009.1"/>
    <property type="status" value="ALT_INIT"/>
    <property type="molecule type" value="Genomic_DNA"/>
</dbReference>
<dbReference type="SMR" id="B0T563"/>
<dbReference type="STRING" id="366602.Caul_4889"/>
<dbReference type="KEGG" id="cak:Caul_4889"/>
<dbReference type="eggNOG" id="COG0806">
    <property type="taxonomic scope" value="Bacteria"/>
</dbReference>
<dbReference type="HOGENOM" id="CLU_077636_0_1_5"/>
<dbReference type="OrthoDB" id="9788191at2"/>
<dbReference type="GO" id="GO:0005737">
    <property type="term" value="C:cytoplasm"/>
    <property type="evidence" value="ECO:0007669"/>
    <property type="project" value="UniProtKB-SubCell"/>
</dbReference>
<dbReference type="GO" id="GO:0005840">
    <property type="term" value="C:ribosome"/>
    <property type="evidence" value="ECO:0007669"/>
    <property type="project" value="InterPro"/>
</dbReference>
<dbReference type="GO" id="GO:0043022">
    <property type="term" value="F:ribosome binding"/>
    <property type="evidence" value="ECO:0007669"/>
    <property type="project" value="InterPro"/>
</dbReference>
<dbReference type="GO" id="GO:0042274">
    <property type="term" value="P:ribosomal small subunit biogenesis"/>
    <property type="evidence" value="ECO:0007669"/>
    <property type="project" value="UniProtKB-UniRule"/>
</dbReference>
<dbReference type="GO" id="GO:0006364">
    <property type="term" value="P:rRNA processing"/>
    <property type="evidence" value="ECO:0007669"/>
    <property type="project" value="UniProtKB-UniRule"/>
</dbReference>
<dbReference type="Gene3D" id="2.30.30.240">
    <property type="entry name" value="PRC-barrel domain"/>
    <property type="match status" value="1"/>
</dbReference>
<dbReference type="Gene3D" id="2.40.30.60">
    <property type="entry name" value="RimM"/>
    <property type="match status" value="1"/>
</dbReference>
<dbReference type="HAMAP" id="MF_00014">
    <property type="entry name" value="Ribosome_mat_RimM"/>
    <property type="match status" value="1"/>
</dbReference>
<dbReference type="InterPro" id="IPR011033">
    <property type="entry name" value="PRC_barrel-like_sf"/>
</dbReference>
<dbReference type="InterPro" id="IPR056792">
    <property type="entry name" value="PRC_RimM"/>
</dbReference>
<dbReference type="InterPro" id="IPR011961">
    <property type="entry name" value="RimM"/>
</dbReference>
<dbReference type="InterPro" id="IPR002676">
    <property type="entry name" value="RimM_N"/>
</dbReference>
<dbReference type="InterPro" id="IPR036976">
    <property type="entry name" value="RimM_N_sf"/>
</dbReference>
<dbReference type="InterPro" id="IPR009000">
    <property type="entry name" value="Transl_B-barrel_sf"/>
</dbReference>
<dbReference type="NCBIfam" id="TIGR02273">
    <property type="entry name" value="16S_RimM"/>
    <property type="match status" value="1"/>
</dbReference>
<dbReference type="PANTHER" id="PTHR33692">
    <property type="entry name" value="RIBOSOME MATURATION FACTOR RIMM"/>
    <property type="match status" value="1"/>
</dbReference>
<dbReference type="PANTHER" id="PTHR33692:SF1">
    <property type="entry name" value="RIBOSOME MATURATION FACTOR RIMM"/>
    <property type="match status" value="1"/>
</dbReference>
<dbReference type="Pfam" id="PF24986">
    <property type="entry name" value="PRC_RimM"/>
    <property type="match status" value="1"/>
</dbReference>
<dbReference type="Pfam" id="PF01782">
    <property type="entry name" value="RimM"/>
    <property type="match status" value="1"/>
</dbReference>
<dbReference type="SUPFAM" id="SSF50346">
    <property type="entry name" value="PRC-barrel domain"/>
    <property type="match status" value="1"/>
</dbReference>
<dbReference type="SUPFAM" id="SSF50447">
    <property type="entry name" value="Translation proteins"/>
    <property type="match status" value="1"/>
</dbReference>
<organism>
    <name type="scientific">Caulobacter sp. (strain K31)</name>
    <dbReference type="NCBI Taxonomy" id="366602"/>
    <lineage>
        <taxon>Bacteria</taxon>
        <taxon>Pseudomonadati</taxon>
        <taxon>Pseudomonadota</taxon>
        <taxon>Alphaproteobacteria</taxon>
        <taxon>Caulobacterales</taxon>
        <taxon>Caulobacteraceae</taxon>
        <taxon>Caulobacter</taxon>
    </lineage>
</organism>
<proteinExistence type="inferred from homology"/>
<name>RIMM_CAUSK</name>